<organism>
    <name type="scientific">Rattus norvegicus</name>
    <name type="common">Rat</name>
    <dbReference type="NCBI Taxonomy" id="10116"/>
    <lineage>
        <taxon>Eukaryota</taxon>
        <taxon>Metazoa</taxon>
        <taxon>Chordata</taxon>
        <taxon>Craniata</taxon>
        <taxon>Vertebrata</taxon>
        <taxon>Euteleostomi</taxon>
        <taxon>Mammalia</taxon>
        <taxon>Eutheria</taxon>
        <taxon>Euarchontoglires</taxon>
        <taxon>Glires</taxon>
        <taxon>Rodentia</taxon>
        <taxon>Myomorpha</taxon>
        <taxon>Muroidea</taxon>
        <taxon>Muridae</taxon>
        <taxon>Murinae</taxon>
        <taxon>Rattus</taxon>
    </lineage>
</organism>
<dbReference type="EMBL" id="AF059258">
    <property type="protein sequence ID" value="AAC18120.1"/>
    <property type="molecule type" value="mRNA"/>
</dbReference>
<dbReference type="EMBL" id="AABR07073327">
    <property type="status" value="NOT_ANNOTATED_CDS"/>
    <property type="molecule type" value="Genomic_DNA"/>
</dbReference>
<dbReference type="EMBL" id="CH473950">
    <property type="protein sequence ID" value="EDM15812.1"/>
    <property type="molecule type" value="Genomic_DNA"/>
</dbReference>
<dbReference type="RefSeq" id="NP_113932.2">
    <property type="nucleotide sequence ID" value="NM_031744.2"/>
</dbReference>
<dbReference type="RefSeq" id="XP_017450591.2">
    <property type="nucleotide sequence ID" value="XM_017595102.2"/>
</dbReference>
<dbReference type="RefSeq" id="XP_017450592.1">
    <property type="nucleotide sequence ID" value="XM_017595103.1"/>
</dbReference>
<dbReference type="SMR" id="O70461"/>
<dbReference type="FunCoup" id="O70461">
    <property type="interactions" value="28"/>
</dbReference>
<dbReference type="STRING" id="10116.ENSRNOP00000016248"/>
<dbReference type="PhosphoSitePlus" id="O70461"/>
<dbReference type="PaxDb" id="10116-ENSRNOP00000016248"/>
<dbReference type="Ensembl" id="ENSRNOT00000016247.4">
    <property type="protein sequence ID" value="ENSRNOP00000016248.1"/>
    <property type="gene ID" value="ENSRNOG00000012090.4"/>
</dbReference>
<dbReference type="GeneID" id="65200"/>
<dbReference type="KEGG" id="rno:65200"/>
<dbReference type="UCSC" id="RGD:69282">
    <property type="organism name" value="rat"/>
</dbReference>
<dbReference type="AGR" id="RGD:69282"/>
<dbReference type="CTD" id="23539"/>
<dbReference type="RGD" id="69282">
    <property type="gene designation" value="Slc16a8"/>
</dbReference>
<dbReference type="eggNOG" id="KOG2504">
    <property type="taxonomic scope" value="Eukaryota"/>
</dbReference>
<dbReference type="GeneTree" id="ENSGT00940000161934"/>
<dbReference type="HOGENOM" id="CLU_001265_59_1_1"/>
<dbReference type="InParanoid" id="O70461"/>
<dbReference type="OMA" id="SMPQVHI"/>
<dbReference type="PhylomeDB" id="O70461"/>
<dbReference type="TreeFam" id="TF313792"/>
<dbReference type="Reactome" id="R-RNO-210991">
    <property type="pathway name" value="Basigin interactions"/>
</dbReference>
<dbReference type="Reactome" id="R-RNO-433692">
    <property type="pathway name" value="Proton-coupled monocarboxylate transport"/>
</dbReference>
<dbReference type="PRO" id="PR:O70461"/>
<dbReference type="Proteomes" id="UP000002494">
    <property type="component" value="Chromosome 7"/>
</dbReference>
<dbReference type="Proteomes" id="UP000234681">
    <property type="component" value="Chromosome 7"/>
</dbReference>
<dbReference type="Bgee" id="ENSRNOG00000012090">
    <property type="expression patterns" value="Expressed in ovary and 1 other cell type or tissue"/>
</dbReference>
<dbReference type="GO" id="GO:0016324">
    <property type="term" value="C:apical plasma membrane"/>
    <property type="evidence" value="ECO:0000266"/>
    <property type="project" value="RGD"/>
</dbReference>
<dbReference type="GO" id="GO:0009925">
    <property type="term" value="C:basal plasma membrane"/>
    <property type="evidence" value="ECO:0000314"/>
    <property type="project" value="RGD"/>
</dbReference>
<dbReference type="GO" id="GO:0016323">
    <property type="term" value="C:basolateral plasma membrane"/>
    <property type="evidence" value="ECO:0000266"/>
    <property type="project" value="RGD"/>
</dbReference>
<dbReference type="GO" id="GO:0005886">
    <property type="term" value="C:plasma membrane"/>
    <property type="evidence" value="ECO:0000318"/>
    <property type="project" value="GO_Central"/>
</dbReference>
<dbReference type="GO" id="GO:0015129">
    <property type="term" value="F:lactate transmembrane transporter activity"/>
    <property type="evidence" value="ECO:0000250"/>
    <property type="project" value="UniProtKB"/>
</dbReference>
<dbReference type="GO" id="GO:0008028">
    <property type="term" value="F:monocarboxylic acid transmembrane transporter activity"/>
    <property type="evidence" value="ECO:0000318"/>
    <property type="project" value="GO_Central"/>
</dbReference>
<dbReference type="GO" id="GO:0015355">
    <property type="term" value="F:secondary active monocarboxylate transmembrane transporter activity"/>
    <property type="evidence" value="ECO:0000304"/>
    <property type="project" value="RGD"/>
</dbReference>
<dbReference type="GO" id="GO:0015293">
    <property type="term" value="F:symporter activity"/>
    <property type="evidence" value="ECO:0007669"/>
    <property type="project" value="UniProtKB-KW"/>
</dbReference>
<dbReference type="CDD" id="cd17430">
    <property type="entry name" value="MFS_MCT3_4"/>
    <property type="match status" value="1"/>
</dbReference>
<dbReference type="FunFam" id="1.20.1250.20:FF:000077">
    <property type="entry name" value="Proton-coupled monocarboxylate transporter 3"/>
    <property type="match status" value="1"/>
</dbReference>
<dbReference type="Gene3D" id="1.20.1250.20">
    <property type="entry name" value="MFS general substrate transporter like domains"/>
    <property type="match status" value="1"/>
</dbReference>
<dbReference type="InterPro" id="IPR004743">
    <property type="entry name" value="MCT"/>
</dbReference>
<dbReference type="InterPro" id="IPR011701">
    <property type="entry name" value="MFS"/>
</dbReference>
<dbReference type="InterPro" id="IPR020846">
    <property type="entry name" value="MFS_dom"/>
</dbReference>
<dbReference type="InterPro" id="IPR036259">
    <property type="entry name" value="MFS_trans_sf"/>
</dbReference>
<dbReference type="InterPro" id="IPR050327">
    <property type="entry name" value="Proton-linked_MCT"/>
</dbReference>
<dbReference type="NCBIfam" id="TIGR00892">
    <property type="entry name" value="2A0113"/>
    <property type="match status" value="1"/>
</dbReference>
<dbReference type="PANTHER" id="PTHR11360">
    <property type="entry name" value="MONOCARBOXYLATE TRANSPORTER"/>
    <property type="match status" value="1"/>
</dbReference>
<dbReference type="PANTHER" id="PTHR11360:SF26">
    <property type="entry name" value="MONOCARBOXYLATE TRANSPORTER 3"/>
    <property type="match status" value="1"/>
</dbReference>
<dbReference type="Pfam" id="PF07690">
    <property type="entry name" value="MFS_1"/>
    <property type="match status" value="1"/>
</dbReference>
<dbReference type="SUPFAM" id="SSF103473">
    <property type="entry name" value="MFS general substrate transporter"/>
    <property type="match status" value="1"/>
</dbReference>
<dbReference type="PROSITE" id="PS50850">
    <property type="entry name" value="MFS"/>
    <property type="match status" value="1"/>
</dbReference>
<accession>O70461</accession>
<accession>G3V7K8</accession>
<proteinExistence type="evidence at transcript level"/>
<feature type="chain" id="PRO_0000211392" description="Monocarboxylate transporter 3">
    <location>
        <begin position="1"/>
        <end position="490"/>
    </location>
</feature>
<feature type="topological domain" description="Cytoplasmic" evidence="4">
    <location>
        <begin position="1"/>
        <end position="14"/>
    </location>
</feature>
<feature type="transmembrane region" description="Helical" evidence="4">
    <location>
        <begin position="15"/>
        <end position="35"/>
    </location>
</feature>
<feature type="topological domain" description="Extracellular" evidence="4">
    <location>
        <begin position="36"/>
        <end position="58"/>
    </location>
</feature>
<feature type="transmembrane region" description="Helical" evidence="4">
    <location>
        <begin position="59"/>
        <end position="79"/>
    </location>
</feature>
<feature type="topological domain" description="Cytoplasmic" evidence="4">
    <location>
        <begin position="80"/>
        <end position="85"/>
    </location>
</feature>
<feature type="transmembrane region" description="Helical" evidence="4">
    <location>
        <begin position="86"/>
        <end position="106"/>
    </location>
</feature>
<feature type="topological domain" description="Extracellular" evidence="4">
    <location>
        <begin position="107"/>
        <end position="115"/>
    </location>
</feature>
<feature type="transmembrane region" description="Helical" evidence="4">
    <location>
        <begin position="116"/>
        <end position="136"/>
    </location>
</feature>
<feature type="topological domain" description="Cytoplasmic" evidence="4">
    <location>
        <begin position="137"/>
        <end position="147"/>
    </location>
</feature>
<feature type="transmembrane region" description="Helical" evidence="4">
    <location>
        <begin position="148"/>
        <end position="168"/>
    </location>
</feature>
<feature type="topological domain" description="Extracellular" evidence="4">
    <location>
        <begin position="169"/>
        <end position="172"/>
    </location>
</feature>
<feature type="transmembrane region" description="Helical" evidence="4">
    <location>
        <begin position="173"/>
        <end position="193"/>
    </location>
</feature>
<feature type="topological domain" description="Cytoplasmic" evidence="4">
    <location>
        <begin position="194"/>
        <end position="230"/>
    </location>
</feature>
<feature type="transmembrane region" description="Helical" evidence="4">
    <location>
        <begin position="231"/>
        <end position="251"/>
    </location>
</feature>
<feature type="topological domain" description="Extracellular" evidence="4">
    <location>
        <begin position="252"/>
        <end position="257"/>
    </location>
</feature>
<feature type="transmembrane region" description="Helical" evidence="4">
    <location>
        <begin position="258"/>
        <end position="278"/>
    </location>
</feature>
<feature type="topological domain" description="Cytoplasmic" evidence="4">
    <location>
        <begin position="279"/>
        <end position="293"/>
    </location>
</feature>
<feature type="transmembrane region" description="Helical" evidence="4">
    <location>
        <begin position="294"/>
        <end position="314"/>
    </location>
</feature>
<feature type="topological domain" description="Extracellular" evidence="4">
    <location>
        <begin position="315"/>
        <end position="318"/>
    </location>
</feature>
<feature type="transmembrane region" description="Helical" evidence="4">
    <location>
        <begin position="319"/>
        <end position="339"/>
    </location>
</feature>
<feature type="topological domain" description="Cytoplasmic" evidence="4">
    <location>
        <begin position="340"/>
        <end position="352"/>
    </location>
</feature>
<feature type="transmembrane region" description="Helical" evidence="4">
    <location>
        <begin position="353"/>
        <end position="373"/>
    </location>
</feature>
<feature type="topological domain" description="Extracellular" evidence="4">
    <location>
        <begin position="374"/>
        <end position="386"/>
    </location>
</feature>
<feature type="transmembrane region" description="Helical" evidence="4">
    <location>
        <begin position="387"/>
        <end position="407"/>
    </location>
</feature>
<feature type="topological domain" description="Cytoplasmic" evidence="4">
    <location>
        <begin position="408"/>
        <end position="490"/>
    </location>
</feature>
<feature type="region of interest" description="Disordered" evidence="5">
    <location>
        <begin position="419"/>
        <end position="490"/>
    </location>
</feature>
<feature type="region of interest" description="Basolateral sorting signal" evidence="2">
    <location>
        <begin position="426"/>
        <end position="460"/>
    </location>
</feature>
<feature type="region of interest" description="Basolateral sorting signal" evidence="2">
    <location>
        <begin position="461"/>
        <end position="480"/>
    </location>
</feature>
<feature type="compositionally biased region" description="Basic and acidic residues" evidence="5">
    <location>
        <begin position="475"/>
        <end position="490"/>
    </location>
</feature>
<feature type="sequence conflict" description="In Ref. 1; AAC18120." ref="1">
    <original>V</original>
    <variation>A</variation>
    <location>
        <position position="397"/>
    </location>
</feature>
<feature type="sequence conflict" description="In Ref. 1; AAC18120." ref="1">
    <original>Q</original>
    <variation>L</variation>
    <location>
        <position position="411"/>
    </location>
</feature>
<feature type="sequence conflict" description="In Ref. 1; AAC18120." ref="1">
    <original>DIPPGP</original>
    <variation>NISSGR</variation>
    <location>
        <begin position="416"/>
        <end position="421"/>
    </location>
</feature>
<feature type="sequence conflict" description="In Ref. 1; AAC18120." ref="1">
    <original>TSDT</original>
    <variation>ASDP</variation>
    <location>
        <begin position="427"/>
        <end position="430"/>
    </location>
</feature>
<feature type="sequence conflict" description="In Ref. 1; AAC18120." ref="1">
    <original>E</original>
    <variation>EQE</variation>
    <location>
        <position position="466"/>
    </location>
</feature>
<feature type="sequence conflict" description="In Ref. 1; AAC18120." ref="1">
    <original>DLSHESV</original>
    <variation>ELDHESI</variation>
    <location>
        <begin position="474"/>
        <end position="480"/>
    </location>
</feature>
<feature type="sequence conflict" description="In Ref. 1; AAC18120." ref="1">
    <original>HGQN</original>
    <variation>RGQK</variation>
    <location>
        <begin position="486"/>
        <end position="489"/>
    </location>
</feature>
<reference key="1">
    <citation type="journal article" date="1998" name="Am. J. Physiol.">
        <title>Monocarboxylate transporter MCT1 is located in the apical membrane and MCT3 in the basal membrane of rat RPE.</title>
        <authorList>
            <person name="Philp N.J."/>
            <person name="Yoon H."/>
            <person name="Grollman E.F."/>
        </authorList>
    </citation>
    <scope>NUCLEOTIDE SEQUENCE [MRNA]</scope>
    <scope>TISSUE SPECIFICITY</scope>
    <scope>SUBCELLULAR LOCATION</scope>
    <source>
        <strain>Sprague-Dawley</strain>
        <tissue>Retina</tissue>
    </source>
</reference>
<reference key="2">
    <citation type="journal article" date="2004" name="Nature">
        <title>Genome sequence of the Brown Norway rat yields insights into mammalian evolution.</title>
        <authorList>
            <person name="Gibbs R.A."/>
            <person name="Weinstock G.M."/>
            <person name="Metzker M.L."/>
            <person name="Muzny D.M."/>
            <person name="Sodergren E.J."/>
            <person name="Scherer S."/>
            <person name="Scott G."/>
            <person name="Steffen D."/>
            <person name="Worley K.C."/>
            <person name="Burch P.E."/>
            <person name="Okwuonu G."/>
            <person name="Hines S."/>
            <person name="Lewis L."/>
            <person name="Deramo C."/>
            <person name="Delgado O."/>
            <person name="Dugan-Rocha S."/>
            <person name="Miner G."/>
            <person name="Morgan M."/>
            <person name="Hawes A."/>
            <person name="Gill R."/>
            <person name="Holt R.A."/>
            <person name="Adams M.D."/>
            <person name="Amanatides P.G."/>
            <person name="Baden-Tillson H."/>
            <person name="Barnstead M."/>
            <person name="Chin S."/>
            <person name="Evans C.A."/>
            <person name="Ferriera S."/>
            <person name="Fosler C."/>
            <person name="Glodek A."/>
            <person name="Gu Z."/>
            <person name="Jennings D."/>
            <person name="Kraft C.L."/>
            <person name="Nguyen T."/>
            <person name="Pfannkoch C.M."/>
            <person name="Sitter C."/>
            <person name="Sutton G.G."/>
            <person name="Venter J.C."/>
            <person name="Woodage T."/>
            <person name="Smith D."/>
            <person name="Lee H.-M."/>
            <person name="Gustafson E."/>
            <person name="Cahill P."/>
            <person name="Kana A."/>
            <person name="Doucette-Stamm L."/>
            <person name="Weinstock K."/>
            <person name="Fechtel K."/>
            <person name="Weiss R.B."/>
            <person name="Dunn D.M."/>
            <person name="Green E.D."/>
            <person name="Blakesley R.W."/>
            <person name="Bouffard G.G."/>
            <person name="De Jong P.J."/>
            <person name="Osoegawa K."/>
            <person name="Zhu B."/>
            <person name="Marra M."/>
            <person name="Schein J."/>
            <person name="Bosdet I."/>
            <person name="Fjell C."/>
            <person name="Jones S."/>
            <person name="Krzywinski M."/>
            <person name="Mathewson C."/>
            <person name="Siddiqui A."/>
            <person name="Wye N."/>
            <person name="McPherson J."/>
            <person name="Zhao S."/>
            <person name="Fraser C.M."/>
            <person name="Shetty J."/>
            <person name="Shatsman S."/>
            <person name="Geer K."/>
            <person name="Chen Y."/>
            <person name="Abramzon S."/>
            <person name="Nierman W.C."/>
            <person name="Havlak P.H."/>
            <person name="Chen R."/>
            <person name="Durbin K.J."/>
            <person name="Egan A."/>
            <person name="Ren Y."/>
            <person name="Song X.-Z."/>
            <person name="Li B."/>
            <person name="Liu Y."/>
            <person name="Qin X."/>
            <person name="Cawley S."/>
            <person name="Cooney A.J."/>
            <person name="D'Souza L.M."/>
            <person name="Martin K."/>
            <person name="Wu J.Q."/>
            <person name="Gonzalez-Garay M.L."/>
            <person name="Jackson A.R."/>
            <person name="Kalafus K.J."/>
            <person name="McLeod M.P."/>
            <person name="Milosavljevic A."/>
            <person name="Virk D."/>
            <person name="Volkov A."/>
            <person name="Wheeler D.A."/>
            <person name="Zhang Z."/>
            <person name="Bailey J.A."/>
            <person name="Eichler E.E."/>
            <person name="Tuzun E."/>
            <person name="Birney E."/>
            <person name="Mongin E."/>
            <person name="Ureta-Vidal A."/>
            <person name="Woodwark C."/>
            <person name="Zdobnov E."/>
            <person name="Bork P."/>
            <person name="Suyama M."/>
            <person name="Torrents D."/>
            <person name="Alexandersson M."/>
            <person name="Trask B.J."/>
            <person name="Young J.M."/>
            <person name="Huang H."/>
            <person name="Wang H."/>
            <person name="Xing H."/>
            <person name="Daniels S."/>
            <person name="Gietzen D."/>
            <person name="Schmidt J."/>
            <person name="Stevens K."/>
            <person name="Vitt U."/>
            <person name="Wingrove J."/>
            <person name="Camara F."/>
            <person name="Mar Alba M."/>
            <person name="Abril J.F."/>
            <person name="Guigo R."/>
            <person name="Smit A."/>
            <person name="Dubchak I."/>
            <person name="Rubin E.M."/>
            <person name="Couronne O."/>
            <person name="Poliakov A."/>
            <person name="Huebner N."/>
            <person name="Ganten D."/>
            <person name="Goesele C."/>
            <person name="Hummel O."/>
            <person name="Kreitler T."/>
            <person name="Lee Y.-A."/>
            <person name="Monti J."/>
            <person name="Schulz H."/>
            <person name="Zimdahl H."/>
            <person name="Himmelbauer H."/>
            <person name="Lehrach H."/>
            <person name="Jacob H.J."/>
            <person name="Bromberg S."/>
            <person name="Gullings-Handley J."/>
            <person name="Jensen-Seaman M.I."/>
            <person name="Kwitek A.E."/>
            <person name="Lazar J."/>
            <person name="Pasko D."/>
            <person name="Tonellato P.J."/>
            <person name="Twigger S."/>
            <person name="Ponting C.P."/>
            <person name="Duarte J.M."/>
            <person name="Rice S."/>
            <person name="Goodstadt L."/>
            <person name="Beatson S.A."/>
            <person name="Emes R.D."/>
            <person name="Winter E.E."/>
            <person name="Webber C."/>
            <person name="Brandt P."/>
            <person name="Nyakatura G."/>
            <person name="Adetobi M."/>
            <person name="Chiaromonte F."/>
            <person name="Elnitski L."/>
            <person name="Eswara P."/>
            <person name="Hardison R.C."/>
            <person name="Hou M."/>
            <person name="Kolbe D."/>
            <person name="Makova K."/>
            <person name="Miller W."/>
            <person name="Nekrutenko A."/>
            <person name="Riemer C."/>
            <person name="Schwartz S."/>
            <person name="Taylor J."/>
            <person name="Yang S."/>
            <person name="Zhang Y."/>
            <person name="Lindpaintner K."/>
            <person name="Andrews T.D."/>
            <person name="Caccamo M."/>
            <person name="Clamp M."/>
            <person name="Clarke L."/>
            <person name="Curwen V."/>
            <person name="Durbin R.M."/>
            <person name="Eyras E."/>
            <person name="Searle S.M."/>
            <person name="Cooper G.M."/>
            <person name="Batzoglou S."/>
            <person name="Brudno M."/>
            <person name="Sidow A."/>
            <person name="Stone E.A."/>
            <person name="Payseur B.A."/>
            <person name="Bourque G."/>
            <person name="Lopez-Otin C."/>
            <person name="Puente X.S."/>
            <person name="Chakrabarti K."/>
            <person name="Chatterji S."/>
            <person name="Dewey C."/>
            <person name="Pachter L."/>
            <person name="Bray N."/>
            <person name="Yap V.B."/>
            <person name="Caspi A."/>
            <person name="Tesler G."/>
            <person name="Pevzner P.A."/>
            <person name="Haussler D."/>
            <person name="Roskin K.M."/>
            <person name="Baertsch R."/>
            <person name="Clawson H."/>
            <person name="Furey T.S."/>
            <person name="Hinrichs A.S."/>
            <person name="Karolchik D."/>
            <person name="Kent W.J."/>
            <person name="Rosenbloom K.R."/>
            <person name="Trumbower H."/>
            <person name="Weirauch M."/>
            <person name="Cooper D.N."/>
            <person name="Stenson P.D."/>
            <person name="Ma B."/>
            <person name="Brent M."/>
            <person name="Arumugam M."/>
            <person name="Shteynberg D."/>
            <person name="Copley R.R."/>
            <person name="Taylor M.S."/>
            <person name="Riethman H."/>
            <person name="Mudunuri U."/>
            <person name="Peterson J."/>
            <person name="Guyer M."/>
            <person name="Felsenfeld A."/>
            <person name="Old S."/>
            <person name="Mockrin S."/>
            <person name="Collins F.S."/>
        </authorList>
    </citation>
    <scope>NUCLEOTIDE SEQUENCE [LARGE SCALE GENOMIC DNA]</scope>
    <source>
        <strain>Brown Norway</strain>
    </source>
</reference>
<reference key="3">
    <citation type="submission" date="2005-09" db="EMBL/GenBank/DDBJ databases">
        <authorList>
            <person name="Mural R.J."/>
            <person name="Adams M.D."/>
            <person name="Myers E.W."/>
            <person name="Smith H.O."/>
            <person name="Venter J.C."/>
        </authorList>
    </citation>
    <scope>NUCLEOTIDE SEQUENCE [LARGE SCALE GENOMIC DNA]</scope>
</reference>
<comment type="function">
    <text evidence="1 3">Probable retinal pigment epithelium (RPE)-specific proton-coupled L-lactate transporter (By similarity). May facilitate transport of lactate and H(+) out of the retina and could therefore play a role in pH and ion homeostasis of the outer retina (By similarity).</text>
</comment>
<comment type="catalytic activity">
    <reaction evidence="3">
        <text>(S)-lactate(in) + H(+)(in) = (S)-lactate(out) + H(+)(out)</text>
        <dbReference type="Rhea" id="RHEA:29415"/>
        <dbReference type="ChEBI" id="CHEBI:15378"/>
        <dbReference type="ChEBI" id="CHEBI:16651"/>
    </reaction>
</comment>
<comment type="subcellular location">
    <subcellularLocation>
        <location evidence="6">Basolateral cell membrane</location>
        <topology evidence="4">Multi-pass membrane protein</topology>
    </subcellularLocation>
    <text evidence="1 2">Basolateral sorting signals (BLSS) in C-terminal cytoplasmic tail ensure its basolateral expression (By similarity). Colocalizes with BSG in basolateral cell membrane of the retinal pigment epithelium (By similarity).</text>
</comment>
<comment type="tissue specificity">
    <text evidence="6">Retinal pigment epithelium.</text>
</comment>
<comment type="domain">
    <text evidence="2">The two basolateral sorting signal (BSS) are required to direct SLC16A8 to the basolateral membrane.</text>
</comment>
<comment type="similarity">
    <text evidence="7">Belongs to the major facilitator superfamily. Monocarboxylate porter (TC 2.A.1.13) family.</text>
</comment>
<sequence length="490" mass="51283">MGAGGPRRGAGPPDGGWGWVVLGACFVITGFAYGFPKAVSVFFRELKRDFGAGYSDTAWVSSIMLAMLYGTGPLSSILVTRFGCRPVMLAGGLLASAGMILASFASRLLELYLTAGVLTGLGLALNFQPSLIMLGLYFERRRPLANGLAAAGSPVFLSTLSPLGQLLGERFGWRGGFLLFGGLLLHCCACGAVMRPPPGPQPRPDPAPPGGRARHRQLLDLAVCTDRTFMVYMVTKFLMALGLFVPAILLVNYAKDAGVPDAEAAFLLSIVGFVDIVARPACGALAGLGRLRPHVPYLFSLALLANGLTDLISARARSYGTLVAFCIAFGLSYGMVGALQFEVLMATVGAPRFPSALGLVLLVEAVAVLIGPPSAGRLVDALKNYEIIFYLAGSEVVLAGVFMAVTTYCCQRCSKDIPPGPSAEGGTSDTEDVEAERDSEPMPASTEEPGSLEALEVLSPRAGSPEPEEEAVPDLSHESVGGHEAHGQNA</sequence>
<evidence type="ECO:0000250" key="1">
    <source>
        <dbReference type="UniProtKB" id="O35308"/>
    </source>
</evidence>
<evidence type="ECO:0000250" key="2">
    <source>
        <dbReference type="UniProtKB" id="O95907"/>
    </source>
</evidence>
<evidence type="ECO:0000250" key="3">
    <source>
        <dbReference type="UniProtKB" id="Q90632"/>
    </source>
</evidence>
<evidence type="ECO:0000255" key="4"/>
<evidence type="ECO:0000256" key="5">
    <source>
        <dbReference type="SAM" id="MobiDB-lite"/>
    </source>
</evidence>
<evidence type="ECO:0000269" key="6">
    <source>
    </source>
</evidence>
<evidence type="ECO:0000305" key="7"/>
<keyword id="KW-1003">Cell membrane</keyword>
<keyword id="KW-0472">Membrane</keyword>
<keyword id="KW-1185">Reference proteome</keyword>
<keyword id="KW-0769">Symport</keyword>
<keyword id="KW-0812">Transmembrane</keyword>
<keyword id="KW-1133">Transmembrane helix</keyword>
<keyword id="KW-0813">Transport</keyword>
<gene>
    <name type="primary">Slc16a8</name>
    <name type="synonym">Mct3</name>
</gene>
<protein>
    <recommendedName>
        <fullName>Monocarboxylate transporter 3</fullName>
        <shortName>MCT 3</shortName>
    </recommendedName>
    <alternativeName>
        <fullName>Solute carrier family 16 member 8</fullName>
    </alternativeName>
</protein>
<name>MOT3_RAT</name>